<name>MOAA_SALPB</name>
<organism>
    <name type="scientific">Salmonella paratyphi B (strain ATCC BAA-1250 / SPB7)</name>
    <dbReference type="NCBI Taxonomy" id="1016998"/>
    <lineage>
        <taxon>Bacteria</taxon>
        <taxon>Pseudomonadati</taxon>
        <taxon>Pseudomonadota</taxon>
        <taxon>Gammaproteobacteria</taxon>
        <taxon>Enterobacterales</taxon>
        <taxon>Enterobacteriaceae</taxon>
        <taxon>Salmonella</taxon>
    </lineage>
</organism>
<accession>A9MTH7</accession>
<protein>
    <recommendedName>
        <fullName evidence="1">GTP 3',8-cyclase</fullName>
        <ecNumber evidence="1">4.1.99.22</ecNumber>
    </recommendedName>
    <alternativeName>
        <fullName evidence="1">Molybdenum cofactor biosynthesis protein A</fullName>
    </alternativeName>
</protein>
<gene>
    <name evidence="1" type="primary">moaA</name>
    <name type="ordered locus">SPAB_02714</name>
</gene>
<proteinExistence type="inferred from homology"/>
<evidence type="ECO:0000255" key="1">
    <source>
        <dbReference type="HAMAP-Rule" id="MF_01225"/>
    </source>
</evidence>
<evidence type="ECO:0000255" key="2">
    <source>
        <dbReference type="PROSITE-ProRule" id="PRU01266"/>
    </source>
</evidence>
<reference key="1">
    <citation type="submission" date="2007-11" db="EMBL/GenBank/DDBJ databases">
        <authorList>
            <consortium name="The Salmonella enterica serovar Paratyphi B Genome Sequencing Project"/>
            <person name="McClelland M."/>
            <person name="Sanderson E.K."/>
            <person name="Porwollik S."/>
            <person name="Spieth J."/>
            <person name="Clifton W.S."/>
            <person name="Fulton R."/>
            <person name="Cordes M."/>
            <person name="Wollam A."/>
            <person name="Shah N."/>
            <person name="Pepin K."/>
            <person name="Bhonagiri V."/>
            <person name="Nash W."/>
            <person name="Johnson M."/>
            <person name="Thiruvilangam P."/>
            <person name="Wilson R."/>
        </authorList>
    </citation>
    <scope>NUCLEOTIDE SEQUENCE [LARGE SCALE GENOMIC DNA]</scope>
    <source>
        <strain>ATCC BAA-1250 / SPB7</strain>
    </source>
</reference>
<dbReference type="EC" id="4.1.99.22" evidence="1"/>
<dbReference type="EMBL" id="CP000886">
    <property type="protein sequence ID" value="ABX68092.1"/>
    <property type="molecule type" value="Genomic_DNA"/>
</dbReference>
<dbReference type="RefSeq" id="WP_000168186.1">
    <property type="nucleotide sequence ID" value="NC_010102.1"/>
</dbReference>
<dbReference type="SMR" id="A9MTH7"/>
<dbReference type="KEGG" id="spq:SPAB_02714"/>
<dbReference type="PATRIC" id="fig|1016998.12.peg.2567"/>
<dbReference type="HOGENOM" id="CLU_009273_0_1_6"/>
<dbReference type="BioCyc" id="SENT1016998:SPAB_RS11030-MONOMER"/>
<dbReference type="UniPathway" id="UPA00344"/>
<dbReference type="Proteomes" id="UP000008556">
    <property type="component" value="Chromosome"/>
</dbReference>
<dbReference type="GO" id="GO:0051539">
    <property type="term" value="F:4 iron, 4 sulfur cluster binding"/>
    <property type="evidence" value="ECO:0007669"/>
    <property type="project" value="UniProtKB-UniRule"/>
</dbReference>
<dbReference type="GO" id="GO:0061799">
    <property type="term" value="F:cyclic pyranopterin monophosphate synthase activity"/>
    <property type="evidence" value="ECO:0007669"/>
    <property type="project" value="TreeGrafter"/>
</dbReference>
<dbReference type="GO" id="GO:0061798">
    <property type="term" value="F:GTP 3',8'-cyclase activity"/>
    <property type="evidence" value="ECO:0007669"/>
    <property type="project" value="UniProtKB-UniRule"/>
</dbReference>
<dbReference type="GO" id="GO:0005525">
    <property type="term" value="F:GTP binding"/>
    <property type="evidence" value="ECO:0007669"/>
    <property type="project" value="UniProtKB-UniRule"/>
</dbReference>
<dbReference type="GO" id="GO:0046872">
    <property type="term" value="F:metal ion binding"/>
    <property type="evidence" value="ECO:0007669"/>
    <property type="project" value="UniProtKB-KW"/>
</dbReference>
<dbReference type="GO" id="GO:1904047">
    <property type="term" value="F:S-adenosyl-L-methionine binding"/>
    <property type="evidence" value="ECO:0007669"/>
    <property type="project" value="UniProtKB-UniRule"/>
</dbReference>
<dbReference type="GO" id="GO:0006777">
    <property type="term" value="P:Mo-molybdopterin cofactor biosynthetic process"/>
    <property type="evidence" value="ECO:0007669"/>
    <property type="project" value="UniProtKB-UniRule"/>
</dbReference>
<dbReference type="CDD" id="cd01335">
    <property type="entry name" value="Radical_SAM"/>
    <property type="match status" value="1"/>
</dbReference>
<dbReference type="CDD" id="cd21117">
    <property type="entry name" value="Twitch_MoaA"/>
    <property type="match status" value="1"/>
</dbReference>
<dbReference type="FunFam" id="3.20.20.70:FF:000057">
    <property type="entry name" value="GTP 3',8-cyclase"/>
    <property type="match status" value="1"/>
</dbReference>
<dbReference type="Gene3D" id="3.20.20.70">
    <property type="entry name" value="Aldolase class I"/>
    <property type="match status" value="1"/>
</dbReference>
<dbReference type="HAMAP" id="MF_01225_B">
    <property type="entry name" value="MoaA_B"/>
    <property type="match status" value="1"/>
</dbReference>
<dbReference type="InterPro" id="IPR013785">
    <property type="entry name" value="Aldolase_TIM"/>
</dbReference>
<dbReference type="InterPro" id="IPR006638">
    <property type="entry name" value="Elp3/MiaA/NifB-like_rSAM"/>
</dbReference>
<dbReference type="InterPro" id="IPR013483">
    <property type="entry name" value="MoaA"/>
</dbReference>
<dbReference type="InterPro" id="IPR000385">
    <property type="entry name" value="MoaA_NifB_PqqE_Fe-S-bd_CS"/>
</dbReference>
<dbReference type="InterPro" id="IPR010505">
    <property type="entry name" value="MoaA_twitch"/>
</dbReference>
<dbReference type="InterPro" id="IPR050105">
    <property type="entry name" value="MoCo_biosynth_MoaA/MoaC"/>
</dbReference>
<dbReference type="InterPro" id="IPR007197">
    <property type="entry name" value="rSAM"/>
</dbReference>
<dbReference type="NCBIfam" id="TIGR02666">
    <property type="entry name" value="moaA"/>
    <property type="match status" value="1"/>
</dbReference>
<dbReference type="PANTHER" id="PTHR22960:SF28">
    <property type="entry name" value="GTP 3',8-CYCLASE"/>
    <property type="match status" value="1"/>
</dbReference>
<dbReference type="PANTHER" id="PTHR22960">
    <property type="entry name" value="MOLYBDOPTERIN COFACTOR SYNTHESIS PROTEIN A"/>
    <property type="match status" value="1"/>
</dbReference>
<dbReference type="Pfam" id="PF06463">
    <property type="entry name" value="Mob_synth_C"/>
    <property type="match status" value="1"/>
</dbReference>
<dbReference type="Pfam" id="PF04055">
    <property type="entry name" value="Radical_SAM"/>
    <property type="match status" value="1"/>
</dbReference>
<dbReference type="SFLD" id="SFLDG01383">
    <property type="entry name" value="cyclic_pyranopterin_phosphate"/>
    <property type="match status" value="1"/>
</dbReference>
<dbReference type="SFLD" id="SFLDG01072">
    <property type="entry name" value="dehydrogenase_like"/>
    <property type="match status" value="1"/>
</dbReference>
<dbReference type="SMART" id="SM00729">
    <property type="entry name" value="Elp3"/>
    <property type="match status" value="1"/>
</dbReference>
<dbReference type="SUPFAM" id="SSF102114">
    <property type="entry name" value="Radical SAM enzymes"/>
    <property type="match status" value="1"/>
</dbReference>
<dbReference type="PROSITE" id="PS01305">
    <property type="entry name" value="MOAA_NIFB_PQQE"/>
    <property type="match status" value="1"/>
</dbReference>
<dbReference type="PROSITE" id="PS51918">
    <property type="entry name" value="RADICAL_SAM"/>
    <property type="match status" value="1"/>
</dbReference>
<feature type="chain" id="PRO_1000085707" description="GTP 3',8-cyclase">
    <location>
        <begin position="1"/>
        <end position="329"/>
    </location>
</feature>
<feature type="domain" description="Radical SAM core" evidence="2">
    <location>
        <begin position="8"/>
        <end position="234"/>
    </location>
</feature>
<feature type="binding site" evidence="1">
    <location>
        <position position="17"/>
    </location>
    <ligand>
        <name>GTP</name>
        <dbReference type="ChEBI" id="CHEBI:37565"/>
    </ligand>
</feature>
<feature type="binding site" evidence="1">
    <location>
        <position position="24"/>
    </location>
    <ligand>
        <name>[4Fe-4S] cluster</name>
        <dbReference type="ChEBI" id="CHEBI:49883"/>
        <label>1</label>
        <note>4Fe-4S-S-AdoMet</note>
    </ligand>
</feature>
<feature type="binding site" evidence="1">
    <location>
        <position position="28"/>
    </location>
    <ligand>
        <name>[4Fe-4S] cluster</name>
        <dbReference type="ChEBI" id="CHEBI:49883"/>
        <label>1</label>
        <note>4Fe-4S-S-AdoMet</note>
    </ligand>
</feature>
<feature type="binding site" evidence="1">
    <location>
        <position position="30"/>
    </location>
    <ligand>
        <name>S-adenosyl-L-methionine</name>
        <dbReference type="ChEBI" id="CHEBI:59789"/>
    </ligand>
</feature>
<feature type="binding site" evidence="1">
    <location>
        <position position="31"/>
    </location>
    <ligand>
        <name>[4Fe-4S] cluster</name>
        <dbReference type="ChEBI" id="CHEBI:49883"/>
        <label>1</label>
        <note>4Fe-4S-S-AdoMet</note>
    </ligand>
</feature>
<feature type="binding site" evidence="1">
    <location>
        <position position="68"/>
    </location>
    <ligand>
        <name>GTP</name>
        <dbReference type="ChEBI" id="CHEBI:37565"/>
    </ligand>
</feature>
<feature type="binding site" evidence="1">
    <location>
        <position position="72"/>
    </location>
    <ligand>
        <name>S-adenosyl-L-methionine</name>
        <dbReference type="ChEBI" id="CHEBI:59789"/>
    </ligand>
</feature>
<feature type="binding site" evidence="1">
    <location>
        <position position="99"/>
    </location>
    <ligand>
        <name>GTP</name>
        <dbReference type="ChEBI" id="CHEBI:37565"/>
    </ligand>
</feature>
<feature type="binding site" evidence="1">
    <location>
        <position position="123"/>
    </location>
    <ligand>
        <name>S-adenosyl-L-methionine</name>
        <dbReference type="ChEBI" id="CHEBI:59789"/>
    </ligand>
</feature>
<feature type="binding site" evidence="1">
    <location>
        <position position="160"/>
    </location>
    <ligand>
        <name>GTP</name>
        <dbReference type="ChEBI" id="CHEBI:37565"/>
    </ligand>
</feature>
<feature type="binding site" evidence="1">
    <location>
        <position position="194"/>
    </location>
    <ligand>
        <name>S-adenosyl-L-methionine</name>
        <dbReference type="ChEBI" id="CHEBI:59789"/>
    </ligand>
</feature>
<feature type="binding site" evidence="1">
    <location>
        <position position="257"/>
    </location>
    <ligand>
        <name>[4Fe-4S] cluster</name>
        <dbReference type="ChEBI" id="CHEBI:49883"/>
        <label>2</label>
        <note>4Fe-4S-substrate</note>
    </ligand>
</feature>
<feature type="binding site" evidence="1">
    <location>
        <position position="260"/>
    </location>
    <ligand>
        <name>[4Fe-4S] cluster</name>
        <dbReference type="ChEBI" id="CHEBI:49883"/>
        <label>2</label>
        <note>4Fe-4S-substrate</note>
    </ligand>
</feature>
<feature type="binding site" evidence="1">
    <location>
        <begin position="262"/>
        <end position="264"/>
    </location>
    <ligand>
        <name>GTP</name>
        <dbReference type="ChEBI" id="CHEBI:37565"/>
    </ligand>
</feature>
<feature type="binding site" evidence="1">
    <location>
        <position position="274"/>
    </location>
    <ligand>
        <name>[4Fe-4S] cluster</name>
        <dbReference type="ChEBI" id="CHEBI:49883"/>
        <label>2</label>
        <note>4Fe-4S-substrate</note>
    </ligand>
</feature>
<keyword id="KW-0004">4Fe-4S</keyword>
<keyword id="KW-0342">GTP-binding</keyword>
<keyword id="KW-0408">Iron</keyword>
<keyword id="KW-0411">Iron-sulfur</keyword>
<keyword id="KW-0456">Lyase</keyword>
<keyword id="KW-0479">Metal-binding</keyword>
<keyword id="KW-0501">Molybdenum cofactor biosynthesis</keyword>
<keyword id="KW-0547">Nucleotide-binding</keyword>
<keyword id="KW-0949">S-adenosyl-L-methionine</keyword>
<sequence length="329" mass="36975">MASQLTDAFARKFYYLRLSITDVCNFRCTYCLPDGYKPGGVTNNGFLTVDEIRRVTRAFASLGTEKVRLTGGEPSLRRDFTDIIAAVGENDAIRQIAVTTNGYRLARDAASWREAGLTGVNVSVDSLDARQFHAITGQDKFRQVMAGIDAAFDAGFEKVKVNTVLMRDVNHHQLDTFLAWIQPRPIQLRFIELMETGEGSDLFRKHHISGQVLRDELIKRGWIHQLRQRSDGPAQVFCHPDYAGEIGLIMPYEKDFCATCNRLRVSSVGKLHLCLFGDGGVSLRDLLQDDAQQYALEERISDALREKKQTHFLHQSNTGITQNLSYIGG</sequence>
<comment type="function">
    <text evidence="1">Catalyzes the cyclization of GTP to (8S)-3',8-cyclo-7,8-dihydroguanosine 5'-triphosphate.</text>
</comment>
<comment type="catalytic activity">
    <reaction evidence="1">
        <text>GTP + AH2 + S-adenosyl-L-methionine = (8S)-3',8-cyclo-7,8-dihydroguanosine 5'-triphosphate + 5'-deoxyadenosine + L-methionine + A + H(+)</text>
        <dbReference type="Rhea" id="RHEA:49576"/>
        <dbReference type="ChEBI" id="CHEBI:13193"/>
        <dbReference type="ChEBI" id="CHEBI:15378"/>
        <dbReference type="ChEBI" id="CHEBI:17319"/>
        <dbReference type="ChEBI" id="CHEBI:17499"/>
        <dbReference type="ChEBI" id="CHEBI:37565"/>
        <dbReference type="ChEBI" id="CHEBI:57844"/>
        <dbReference type="ChEBI" id="CHEBI:59789"/>
        <dbReference type="ChEBI" id="CHEBI:131766"/>
        <dbReference type="EC" id="4.1.99.22"/>
    </reaction>
</comment>
<comment type="cofactor">
    <cofactor evidence="1">
        <name>[4Fe-4S] cluster</name>
        <dbReference type="ChEBI" id="CHEBI:49883"/>
    </cofactor>
    <text evidence="1">Binds 2 [4Fe-4S] clusters. Binds 1 [4Fe-4S] cluster coordinated with 3 cysteines and an exchangeable S-adenosyl-L-methionine and 1 [4Fe-4S] cluster coordinated with 3 cysteines and the GTP-derived substrate.</text>
</comment>
<comment type="pathway">
    <text evidence="1">Cofactor biosynthesis; molybdopterin biosynthesis.</text>
</comment>
<comment type="subunit">
    <text evidence="1">Monomer and homodimer.</text>
</comment>
<comment type="similarity">
    <text evidence="1">Belongs to the radical SAM superfamily. MoaA family.</text>
</comment>